<evidence type="ECO:0000250" key="1"/>
<evidence type="ECO:0000255" key="2"/>
<evidence type="ECO:0000255" key="3">
    <source>
        <dbReference type="PROSITE-ProRule" id="PRU01375"/>
    </source>
</evidence>
<evidence type="ECO:0000305" key="4"/>
<dbReference type="EMBL" id="AY228475">
    <property type="protein sequence ID" value="AAO73558.1"/>
    <property type="molecule type" value="mRNA"/>
</dbReference>
<dbReference type="RefSeq" id="NP_942066.1">
    <property type="nucleotide sequence ID" value="NM_198771.2"/>
</dbReference>
<dbReference type="SMR" id="Q810F4"/>
<dbReference type="FunCoup" id="Q810F4">
    <property type="interactions" value="1206"/>
</dbReference>
<dbReference type="STRING" id="10116.ENSRNOP00000075071"/>
<dbReference type="PhosphoSitePlus" id="Q810F4"/>
<dbReference type="jPOST" id="Q810F4"/>
<dbReference type="PaxDb" id="10116-ENSRNOP00000007886"/>
<dbReference type="GeneID" id="312159"/>
<dbReference type="KEGG" id="rno:312159"/>
<dbReference type="UCSC" id="RGD:735193">
    <property type="organism name" value="rat"/>
</dbReference>
<dbReference type="AGR" id="RGD:735193"/>
<dbReference type="CTD" id="10447"/>
<dbReference type="RGD" id="735193">
    <property type="gene designation" value="Fam3c"/>
</dbReference>
<dbReference type="VEuPathDB" id="HostDB:ENSRNOG00000060349"/>
<dbReference type="eggNOG" id="ENOG502QQR8">
    <property type="taxonomic scope" value="Eukaryota"/>
</dbReference>
<dbReference type="HOGENOM" id="CLU_099478_0_0_1"/>
<dbReference type="InParanoid" id="Q810F4"/>
<dbReference type="OrthoDB" id="18421at9989"/>
<dbReference type="PhylomeDB" id="Q810F4"/>
<dbReference type="TreeFam" id="TF353414"/>
<dbReference type="Reactome" id="R-RNO-114608">
    <property type="pathway name" value="Platelet degranulation"/>
</dbReference>
<dbReference type="PRO" id="PR:Q810F4"/>
<dbReference type="Proteomes" id="UP000002494">
    <property type="component" value="Chromosome 4"/>
</dbReference>
<dbReference type="Bgee" id="ENSRNOG00000060349">
    <property type="expression patterns" value="Expressed in stomach and 20 other cell types or tissues"/>
</dbReference>
<dbReference type="ExpressionAtlas" id="Q810F4">
    <property type="expression patterns" value="baseline and differential"/>
</dbReference>
<dbReference type="GO" id="GO:0031410">
    <property type="term" value="C:cytoplasmic vesicle"/>
    <property type="evidence" value="ECO:0007669"/>
    <property type="project" value="UniProtKB-KW"/>
</dbReference>
<dbReference type="GO" id="GO:0005615">
    <property type="term" value="C:extracellular space"/>
    <property type="evidence" value="ECO:0000318"/>
    <property type="project" value="GO_Central"/>
</dbReference>
<dbReference type="GO" id="GO:0030246">
    <property type="term" value="F:carbohydrate binding"/>
    <property type="evidence" value="ECO:0007669"/>
    <property type="project" value="UniProtKB-KW"/>
</dbReference>
<dbReference type="GO" id="GO:0005125">
    <property type="term" value="F:cytokine activity"/>
    <property type="evidence" value="ECO:0000266"/>
    <property type="project" value="RGD"/>
</dbReference>
<dbReference type="GO" id="GO:0009913">
    <property type="term" value="P:epidermal cell differentiation"/>
    <property type="evidence" value="ECO:0000266"/>
    <property type="project" value="RGD"/>
</dbReference>
<dbReference type="GO" id="GO:0070371">
    <property type="term" value="P:ERK1 and ERK2 cascade"/>
    <property type="evidence" value="ECO:0000266"/>
    <property type="project" value="RGD"/>
</dbReference>
<dbReference type="GO" id="GO:0010467">
    <property type="term" value="P:gene expression"/>
    <property type="evidence" value="ECO:0000266"/>
    <property type="project" value="RGD"/>
</dbReference>
<dbReference type="GO" id="GO:0006954">
    <property type="term" value="P:inflammatory response"/>
    <property type="evidence" value="ECO:0000266"/>
    <property type="project" value="RGD"/>
</dbReference>
<dbReference type="GO" id="GO:0043616">
    <property type="term" value="P:keratinocyte proliferation"/>
    <property type="evidence" value="ECO:0000266"/>
    <property type="project" value="RGD"/>
</dbReference>
<dbReference type="GO" id="GO:0030223">
    <property type="term" value="P:neutrophil differentiation"/>
    <property type="evidence" value="ECO:0000266"/>
    <property type="project" value="RGD"/>
</dbReference>
<dbReference type="GO" id="GO:0043491">
    <property type="term" value="P:phosphatidylinositol 3-kinase/protein kinase B signal transduction"/>
    <property type="evidence" value="ECO:0000266"/>
    <property type="project" value="RGD"/>
</dbReference>
<dbReference type="CDD" id="cd13940">
    <property type="entry name" value="ILEI_FAM3C"/>
    <property type="match status" value="1"/>
</dbReference>
<dbReference type="InterPro" id="IPR039220">
    <property type="entry name" value="FAM3"/>
</dbReference>
<dbReference type="InterPro" id="IPR039477">
    <property type="entry name" value="ILEI/PANDER_dom"/>
</dbReference>
<dbReference type="InterPro" id="IPR039475">
    <property type="entry name" value="ILEI_FAM3C"/>
</dbReference>
<dbReference type="PANTHER" id="PTHR14592">
    <property type="entry name" value="UNCHARACTERIZED FAM3"/>
    <property type="match status" value="1"/>
</dbReference>
<dbReference type="Pfam" id="PF15711">
    <property type="entry name" value="ILEI"/>
    <property type="match status" value="1"/>
</dbReference>
<dbReference type="PROSITE" id="PS52031">
    <property type="entry name" value="GG_LECTIN"/>
    <property type="match status" value="1"/>
</dbReference>
<proteinExistence type="evidence at transcript level"/>
<organism>
    <name type="scientific">Rattus norvegicus</name>
    <name type="common">Rat</name>
    <dbReference type="NCBI Taxonomy" id="10116"/>
    <lineage>
        <taxon>Eukaryota</taxon>
        <taxon>Metazoa</taxon>
        <taxon>Chordata</taxon>
        <taxon>Craniata</taxon>
        <taxon>Vertebrata</taxon>
        <taxon>Euteleostomi</taxon>
        <taxon>Mammalia</taxon>
        <taxon>Eutheria</taxon>
        <taxon>Euarchontoglires</taxon>
        <taxon>Glires</taxon>
        <taxon>Rodentia</taxon>
        <taxon>Myomorpha</taxon>
        <taxon>Muroidea</taxon>
        <taxon>Muridae</taxon>
        <taxon>Murinae</taxon>
        <taxon>Rattus</taxon>
    </lineage>
</organism>
<reference key="1">
    <citation type="submission" date="2003-02" db="EMBL/GenBank/DDBJ databases">
        <title>Novel genes in rat bone marrow.</title>
        <authorList>
            <person name="Buki K.G."/>
            <person name="Vaananen K."/>
        </authorList>
    </citation>
    <scope>NUCLEOTIDE SEQUENCE [MRNA]</scope>
    <source>
        <strain>Wistar</strain>
        <tissue>Bone marrow</tissue>
    </source>
</reference>
<feature type="signal peptide" evidence="2">
    <location>
        <begin position="1"/>
        <end position="24"/>
    </location>
</feature>
<feature type="chain" id="PRO_0000395982" description="Protein FAM3C">
    <location>
        <begin position="25"/>
        <end position="227"/>
    </location>
</feature>
<feature type="domain" description="GG-type lectin" evidence="3">
    <location>
        <begin position="67"/>
        <end position="225"/>
    </location>
</feature>
<feature type="disulfide bond" evidence="1">
    <location>
        <begin position="58"/>
        <end position="86"/>
    </location>
</feature>
<feature type="disulfide bond" evidence="1">
    <location>
        <begin position="64"/>
        <end position="221"/>
    </location>
</feature>
<protein>
    <recommendedName>
        <fullName>Protein FAM3C</fullName>
    </recommendedName>
    <alternativeName>
        <fullName>Interleukin-like EMT inducer</fullName>
    </alternativeName>
</protein>
<gene>
    <name type="primary">Fam3c</name>
    <name type="synonym">Ilei</name>
</gene>
<name>FAM3C_RAT</name>
<comment type="function">
    <text evidence="1">May be involved in retinal laminar formation. Promotes epithelial to mesenchymal transition (By similarity).</text>
</comment>
<comment type="subcellular location">
    <subcellularLocation>
        <location evidence="1">Secreted</location>
    </subcellularLocation>
    <subcellularLocation>
        <location evidence="1">Cytoplasmic vesicle</location>
    </subcellularLocation>
</comment>
<comment type="similarity">
    <text evidence="4">Belongs to the FAM3 family.</text>
</comment>
<sequence length="227" mass="24714">MRVAGAAKLVVAVAVFLLTFYVISQVFEIKMDASLGSLFARSALDSAIRSTKPPRYKCGISKACPEKHFAFKMASGAANVVGPKICLEDNVLMSGVKNNVGRGINVALVNGKTGDVIDTKYFDMWGGDVAPFIEFLKTIQDGTVVLMATYDDGATKLTEEARRLIAELGSTSITSLGFRDNWVFCGGKGIKTKSPFEQHIKNNKDTNKYEGWPEVVEMEGCIPQKQD</sequence>
<keyword id="KW-0968">Cytoplasmic vesicle</keyword>
<keyword id="KW-0217">Developmental protein</keyword>
<keyword id="KW-1015">Disulfide bond</keyword>
<keyword id="KW-0430">Lectin</keyword>
<keyword id="KW-0553">Oncogene</keyword>
<keyword id="KW-1185">Reference proteome</keyword>
<keyword id="KW-0964">Secreted</keyword>
<keyword id="KW-0732">Signal</keyword>
<accession>Q810F4</accession>